<sequence length="25" mass="2974">LFHYCQCQCPPGFKGKFCQFKLRPP</sequence>
<protein>
    <recommendedName>
        <fullName evidence="2 3">NU-conotoxin-Ltg1a</fullName>
        <shortName evidence="2 3">NU-CTX-Ltg1a</shortName>
    </recommendedName>
    <alternativeName>
        <fullName evidence="2">N-CTX-Ltg1a</fullName>
    </alternativeName>
</protein>
<proteinExistence type="evidence at protein level"/>
<comment type="function">
    <text evidence="1">Peptide with nanomolar affinity for human melanocortin receptors. The natural disulfide pairing being unknown, the activity of all three possible peptides (with the cysteine pairings 'bead (I-II, III-IV), 'globular' (I-III, II-IV), and 'ribbon' (I-IV, II-III)) have been tested. All three isomers show similar affinities on each human melanocortin subtype (MC1R (~500 nM), MC3R (~100 nM), MC4R (~50 nM), and MC5R (~50 nM)).</text>
</comment>
<comment type="subcellular location">
    <subcellularLocation>
        <location evidence="4">Secreted</location>
    </subcellularLocation>
</comment>
<comment type="tissue specificity">
    <text evidence="4">Expressed by the venom duct.</text>
</comment>
<comment type="domain">
    <text evidence="3">The cysteine framework is XIV (C-C-C-C).</text>
</comment>
<comment type="PTM">
    <text evidence="1 3">Contains 2 disulfide bonds (Probable). However, cysteine pairing is not critical for peptide binding to melanocortin receptors, since peptides with different pairings have similar potency at the receptors tested (PubMed:36063022).</text>
</comment>
<comment type="miscellaneous">
    <text evidence="1">Many analogs have been synthesized. Among them, the linear peptide Hunger-Toxin (HT1-0) shows an increased affinity for human melanocortin receptors MC1R (200 nM), MC3R (40 nM), and MC4R (15 nM), and a decreased affinity for MC5R (200 nM). This analog also binds to type-2 angiotensin II receptor (AGTR2), but has no effect on type-1 angiotensin II receptor (AGTR1), vasopressin 2 receptor (V2R), and the five muscarinic receptors (CHRM1-CHRM5).</text>
</comment>
<name>CU1A_CONLO</name>
<accession>P0DQY6</accession>
<dbReference type="GO" id="GO:0005576">
    <property type="term" value="C:extracellular region"/>
    <property type="evidence" value="ECO:0007669"/>
    <property type="project" value="UniProtKB-SubCell"/>
</dbReference>
<dbReference type="GO" id="GO:0090729">
    <property type="term" value="F:toxin activity"/>
    <property type="evidence" value="ECO:0007669"/>
    <property type="project" value="UniProtKB-KW"/>
</dbReference>
<dbReference type="Gene3D" id="2.10.25.10">
    <property type="entry name" value="Laminin"/>
    <property type="match status" value="1"/>
</dbReference>
<dbReference type="InterPro" id="IPR000742">
    <property type="entry name" value="EGF-like_dom"/>
</dbReference>
<dbReference type="SUPFAM" id="SSF57196">
    <property type="entry name" value="EGF/Laminin"/>
    <property type="match status" value="1"/>
</dbReference>
<organism>
    <name type="scientific">Conus litoglyphus</name>
    <name type="common">Lithograph cone</name>
    <dbReference type="NCBI Taxonomy" id="97191"/>
    <lineage>
        <taxon>Eukaryota</taxon>
        <taxon>Metazoa</taxon>
        <taxon>Spiralia</taxon>
        <taxon>Lophotrochozoa</taxon>
        <taxon>Mollusca</taxon>
        <taxon>Gastropoda</taxon>
        <taxon>Caenogastropoda</taxon>
        <taxon>Neogastropoda</taxon>
        <taxon>Conoidea</taxon>
        <taxon>Conidae</taxon>
        <taxon>Conus</taxon>
        <taxon>Strategoconus</taxon>
    </lineage>
</organism>
<evidence type="ECO:0000269" key="1">
    <source>
    </source>
</evidence>
<evidence type="ECO:0000303" key="2">
    <source>
    </source>
</evidence>
<evidence type="ECO:0000305" key="3"/>
<evidence type="ECO:0000305" key="4">
    <source>
    </source>
</evidence>
<feature type="peptide" id="PRO_0000458001" description="NU-conotoxin-Ltg1a" evidence="1">
    <location>
        <begin position="1"/>
        <end position="25"/>
    </location>
</feature>
<feature type="mutagenesis site" description="In HT1-0; increase in affinity for melanocortin receptors MC1R, MC3R, and MC4R and 4-fold decrease in affinity for MC5R; when associated with Q-7; Q-9 and Q-18." evidence="1">
    <original>C</original>
    <variation>Q</variation>
    <location>
        <position position="5"/>
    </location>
</feature>
<feature type="mutagenesis site" description="In HT1-0; increase in affinity for melanocortin receptors MC1R, MC3R, and MC4R and 4-fold decrease in affinity for MC5R; when associated with Q-5; Q-9 and Q-18." evidence="1">
    <original>C</original>
    <variation>Q</variation>
    <location>
        <position position="7"/>
    </location>
</feature>
<feature type="mutagenesis site" description="In HT1-0; increase in affinity for melanocortin receptors MC1R, MC3R, and MC4R and 4-fold decrease in affinity for MC5R; when associated with Q-5; Q-7 and Q-18." evidence="1">
    <original>C</original>
    <variation>Q</variation>
    <location>
        <position position="9"/>
    </location>
</feature>
<feature type="mutagenesis site" description="In HT1-0; increase in affinity for melanocortin receptors MC1R, MC3R, and MC4R and 4-fold decrease in affinity for MC5R; when associated with Q-5; Q-7 and Q-9." evidence="1">
    <original>C</original>
    <variation>Q</variation>
    <location>
        <position position="18"/>
    </location>
</feature>
<keyword id="KW-1015">Disulfide bond</keyword>
<keyword id="KW-1213">G-protein coupled receptor impairing toxin</keyword>
<keyword id="KW-0964">Secreted</keyword>
<keyword id="KW-0800">Toxin</keyword>
<reference key="1">
    <citation type="journal article" date="2022" name="J. Med. Chem.">
        <title>From a cone snail toxin to a competitive MC4R antagonist.</title>
        <authorList>
            <person name="Reynaud S."/>
            <person name="Laurin S.A."/>
            <person name="Ciolek J."/>
            <person name="Barbe P."/>
            <person name="Van Baelen A.C."/>
            <person name="Susset M."/>
            <person name="Blondel F."/>
            <person name="Ghazarian M."/>
            <person name="Boeri J."/>
            <person name="Vanden Driessche M."/>
            <person name="Upert G."/>
            <person name="Mourier G."/>
            <person name="Kessler P."/>
            <person name="Konnert L."/>
            <person name="Beroud R."/>
            <person name="Keck M."/>
            <person name="Servent D."/>
            <person name="Bouvier M."/>
            <person name="Gilles N."/>
        </authorList>
    </citation>
    <scope>NUCLEOTIDE SEQUENCE [MRNA]</scope>
    <scope>FUNCTION</scope>
    <scope>SYNTHESIS</scope>
    <scope>MUTAGENESIS OF CYS-5; CYS-7; CYS-9 AND CYS-18</scope>
    <source>
        <tissue>Venom duct</tissue>
    </source>
</reference>